<proteinExistence type="evidence at protein level"/>
<gene>
    <name type="primary">MYO4</name>
    <name type="synonym">SHE1</name>
    <name type="ordered locus">YAL029C</name>
    <name type="ORF">FUN22</name>
</gene>
<organism>
    <name type="scientific">Saccharomyces cerevisiae (strain ATCC 204508 / S288c)</name>
    <name type="common">Baker's yeast</name>
    <dbReference type="NCBI Taxonomy" id="559292"/>
    <lineage>
        <taxon>Eukaryota</taxon>
        <taxon>Fungi</taxon>
        <taxon>Dikarya</taxon>
        <taxon>Ascomycota</taxon>
        <taxon>Saccharomycotina</taxon>
        <taxon>Saccharomycetes</taxon>
        <taxon>Saccharomycetales</taxon>
        <taxon>Saccharomycetaceae</taxon>
        <taxon>Saccharomyces</taxon>
    </lineage>
</organism>
<feature type="chain" id="PRO_0000123491" description="Myosin-4">
    <location>
        <begin position="1"/>
        <end position="1471"/>
    </location>
</feature>
<feature type="domain" description="Myosin N-terminal SH3-like" evidence="5">
    <location>
        <begin position="4"/>
        <end position="57"/>
    </location>
</feature>
<feature type="domain" description="Myosin motor" evidence="4">
    <location>
        <begin position="71"/>
        <end position="777"/>
    </location>
</feature>
<feature type="domain" description="IQ 1" evidence="2">
    <location>
        <begin position="781"/>
        <end position="801"/>
    </location>
</feature>
<feature type="domain" description="IQ 2" evidence="2">
    <location>
        <begin position="804"/>
        <end position="824"/>
    </location>
</feature>
<feature type="domain" description="IQ 3" evidence="2">
    <location>
        <begin position="829"/>
        <end position="849"/>
    </location>
</feature>
<feature type="domain" description="IQ 4" evidence="2">
    <location>
        <begin position="876"/>
        <end position="898"/>
    </location>
</feature>
<feature type="domain" description="IQ 5" evidence="2">
    <location>
        <begin position="899"/>
        <end position="928"/>
    </location>
</feature>
<feature type="domain" description="Dilute" evidence="3">
    <location>
        <begin position="1164"/>
        <end position="1419"/>
    </location>
</feature>
<feature type="region of interest" description="Actin-binding" evidence="4">
    <location>
        <begin position="647"/>
        <end position="669"/>
    </location>
</feature>
<feature type="coiled-coil region">
    <location>
        <begin position="938"/>
        <end position="1063"/>
    </location>
</feature>
<feature type="binding site" evidence="1">
    <location>
        <begin position="165"/>
        <end position="172"/>
    </location>
    <ligand>
        <name>ATP</name>
        <dbReference type="ChEBI" id="CHEBI:30616"/>
    </ligand>
</feature>
<feature type="helix" evidence="16">
    <location>
        <begin position="1104"/>
        <end position="1109"/>
    </location>
</feature>
<feature type="helix" evidence="16">
    <location>
        <begin position="1111"/>
        <end position="1121"/>
    </location>
</feature>
<feature type="helix" evidence="17">
    <location>
        <begin position="1128"/>
        <end position="1130"/>
    </location>
</feature>
<feature type="helix" evidence="16">
    <location>
        <begin position="1138"/>
        <end position="1152"/>
    </location>
</feature>
<feature type="helix" evidence="16">
    <location>
        <begin position="1156"/>
        <end position="1176"/>
    </location>
</feature>
<feature type="turn" evidence="16">
    <location>
        <begin position="1179"/>
        <end position="1181"/>
    </location>
</feature>
<feature type="helix" evidence="16">
    <location>
        <begin position="1182"/>
        <end position="1193"/>
    </location>
</feature>
<feature type="helix" evidence="16">
    <location>
        <begin position="1196"/>
        <end position="1204"/>
    </location>
</feature>
<feature type="helix" evidence="17">
    <location>
        <begin position="1205"/>
        <end position="1207"/>
    </location>
</feature>
<feature type="helix" evidence="16">
    <location>
        <begin position="1217"/>
        <end position="1253"/>
    </location>
</feature>
<feature type="helix" evidence="16">
    <location>
        <begin position="1255"/>
        <end position="1259"/>
    </location>
</feature>
<feature type="helix" evidence="16">
    <location>
        <begin position="1262"/>
        <end position="1264"/>
    </location>
</feature>
<feature type="strand" evidence="16">
    <location>
        <begin position="1265"/>
        <end position="1267"/>
    </location>
</feature>
<feature type="helix" evidence="16">
    <location>
        <begin position="1270"/>
        <end position="1289"/>
    </location>
</feature>
<feature type="helix" evidence="16">
    <location>
        <begin position="1294"/>
        <end position="1319"/>
    </location>
</feature>
<feature type="helix" evidence="16">
    <location>
        <begin position="1325"/>
        <end position="1342"/>
    </location>
</feature>
<feature type="turn" evidence="16">
    <location>
        <begin position="1343"/>
        <end position="1345"/>
    </location>
</feature>
<feature type="helix" evidence="16">
    <location>
        <begin position="1350"/>
        <end position="1353"/>
    </location>
</feature>
<feature type="helix" evidence="16">
    <location>
        <begin position="1354"/>
        <end position="1364"/>
    </location>
</feature>
<feature type="helix" evidence="16">
    <location>
        <begin position="1370"/>
        <end position="1377"/>
    </location>
</feature>
<feature type="helix" evidence="16">
    <location>
        <begin position="1385"/>
        <end position="1393"/>
    </location>
</feature>
<feature type="strand" evidence="17">
    <location>
        <begin position="1398"/>
        <end position="1401"/>
    </location>
</feature>
<feature type="helix" evidence="16">
    <location>
        <begin position="1407"/>
        <end position="1423"/>
    </location>
</feature>
<feature type="helix" evidence="16">
    <location>
        <begin position="1440"/>
        <end position="1442"/>
    </location>
</feature>
<feature type="helix" evidence="16">
    <location>
        <begin position="1460"/>
        <end position="1467"/>
    </location>
</feature>
<name>MYO4_YEAST</name>
<dbReference type="EMBL" id="M90057">
    <property type="protein sequence ID" value="AAC37409.1"/>
    <property type="molecule type" value="Unassigned_DNA"/>
</dbReference>
<dbReference type="EMBL" id="U12980">
    <property type="protein sequence ID" value="AAC05003.1"/>
    <property type="molecule type" value="Genomic_DNA"/>
</dbReference>
<dbReference type="EMBL" id="BK006935">
    <property type="protein sequence ID" value="DAA06959.1"/>
    <property type="molecule type" value="Genomic_DNA"/>
</dbReference>
<dbReference type="PIR" id="S30790">
    <property type="entry name" value="S30790"/>
</dbReference>
<dbReference type="RefSeq" id="NP_009373.1">
    <property type="nucleotide sequence ID" value="NM_001178174.1"/>
</dbReference>
<dbReference type="PDB" id="3MMI">
    <property type="method" value="X-ray"/>
    <property type="resolution" value="2.30 A"/>
    <property type="chains" value="A/B=1091-1471"/>
</dbReference>
<dbReference type="PDB" id="4LL6">
    <property type="method" value="X-ray"/>
    <property type="resolution" value="2.30 A"/>
    <property type="chains" value="A=1098-1471"/>
</dbReference>
<dbReference type="PDB" id="4LL8">
    <property type="method" value="X-ray"/>
    <property type="resolution" value="3.58 A"/>
    <property type="chains" value="A=918-1471"/>
</dbReference>
<dbReference type="PDBsum" id="3MMI"/>
<dbReference type="PDBsum" id="4LL6"/>
<dbReference type="PDBsum" id="4LL8"/>
<dbReference type="SMR" id="P32492"/>
<dbReference type="BioGRID" id="31737">
    <property type="interactions" value="139"/>
</dbReference>
<dbReference type="ComplexPortal" id="CPX-1501">
    <property type="entry name" value="Myosin class V complex, MYO4 variant"/>
</dbReference>
<dbReference type="DIP" id="DIP-5761N"/>
<dbReference type="FunCoup" id="P32492">
    <property type="interactions" value="491"/>
</dbReference>
<dbReference type="IntAct" id="P32492">
    <property type="interactions" value="35"/>
</dbReference>
<dbReference type="MINT" id="P32492"/>
<dbReference type="STRING" id="4932.YAL029C"/>
<dbReference type="iPTMnet" id="P32492"/>
<dbReference type="PaxDb" id="4932-YAL029C"/>
<dbReference type="PeptideAtlas" id="P32492"/>
<dbReference type="EnsemblFungi" id="YAL029C_mRNA">
    <property type="protein sequence ID" value="YAL029C"/>
    <property type="gene ID" value="YAL029C"/>
</dbReference>
<dbReference type="GeneID" id="851204"/>
<dbReference type="KEGG" id="sce:YAL029C"/>
<dbReference type="AGR" id="SGD:S000000027"/>
<dbReference type="SGD" id="S000000027">
    <property type="gene designation" value="MYO4"/>
</dbReference>
<dbReference type="VEuPathDB" id="FungiDB:YAL029C"/>
<dbReference type="eggNOG" id="KOG0160">
    <property type="taxonomic scope" value="Eukaryota"/>
</dbReference>
<dbReference type="GeneTree" id="ENSGT00940000170389"/>
<dbReference type="HOGENOM" id="CLU_000192_9_0_1"/>
<dbReference type="InParanoid" id="P32492"/>
<dbReference type="OMA" id="DESWASK"/>
<dbReference type="OrthoDB" id="6108017at2759"/>
<dbReference type="BioCyc" id="YEAST:G3O-28840-MONOMER"/>
<dbReference type="Reactome" id="R-SCE-9013419">
    <property type="pathway name" value="RHOT2 GTPase cycle"/>
</dbReference>
<dbReference type="Reactome" id="R-SCE-9013420">
    <property type="pathway name" value="RHOU GTPase cycle"/>
</dbReference>
<dbReference type="Reactome" id="R-SCE-9013425">
    <property type="pathway name" value="RHOT1 GTPase cycle"/>
</dbReference>
<dbReference type="BioGRID-ORCS" id="851204">
    <property type="hits" value="0 hits in 10 CRISPR screens"/>
</dbReference>
<dbReference type="EvolutionaryTrace" id="P32492"/>
<dbReference type="PRO" id="PR:P32492"/>
<dbReference type="Proteomes" id="UP000002311">
    <property type="component" value="Chromosome I"/>
</dbReference>
<dbReference type="RNAct" id="P32492">
    <property type="molecule type" value="protein"/>
</dbReference>
<dbReference type="GO" id="GO:0015629">
    <property type="term" value="C:actin cytoskeleton"/>
    <property type="evidence" value="ECO:0000318"/>
    <property type="project" value="GO_Central"/>
</dbReference>
<dbReference type="GO" id="GO:0005933">
    <property type="term" value="C:cellular bud"/>
    <property type="evidence" value="ECO:0000314"/>
    <property type="project" value="SGD"/>
</dbReference>
<dbReference type="GO" id="GO:0005934">
    <property type="term" value="C:cellular bud tip"/>
    <property type="evidence" value="ECO:0000314"/>
    <property type="project" value="SGD"/>
</dbReference>
<dbReference type="GO" id="GO:0005737">
    <property type="term" value="C:cytoplasm"/>
    <property type="evidence" value="ECO:0000318"/>
    <property type="project" value="GO_Central"/>
</dbReference>
<dbReference type="GO" id="GO:0031941">
    <property type="term" value="C:filamentous actin"/>
    <property type="evidence" value="ECO:0000314"/>
    <property type="project" value="SGD"/>
</dbReference>
<dbReference type="GO" id="GO:0016020">
    <property type="term" value="C:membrane"/>
    <property type="evidence" value="ECO:0000318"/>
    <property type="project" value="GO_Central"/>
</dbReference>
<dbReference type="GO" id="GO:0005739">
    <property type="term" value="C:mitochondrion"/>
    <property type="evidence" value="ECO:0007005"/>
    <property type="project" value="SGD"/>
</dbReference>
<dbReference type="GO" id="GO:0031475">
    <property type="term" value="C:myosin V complex"/>
    <property type="evidence" value="ECO:0000303"/>
    <property type="project" value="ComplexPortal"/>
</dbReference>
<dbReference type="GO" id="GO:0051015">
    <property type="term" value="F:actin filament binding"/>
    <property type="evidence" value="ECO:0000314"/>
    <property type="project" value="SGD"/>
</dbReference>
<dbReference type="GO" id="GO:0005524">
    <property type="term" value="F:ATP binding"/>
    <property type="evidence" value="ECO:0007669"/>
    <property type="project" value="UniProtKB-KW"/>
</dbReference>
<dbReference type="GO" id="GO:0005516">
    <property type="term" value="F:calmodulin binding"/>
    <property type="evidence" value="ECO:0007669"/>
    <property type="project" value="UniProtKB-KW"/>
</dbReference>
<dbReference type="GO" id="GO:0000146">
    <property type="term" value="F:microfilament motor activity"/>
    <property type="evidence" value="ECO:0000314"/>
    <property type="project" value="SGD"/>
</dbReference>
<dbReference type="GO" id="GO:0007015">
    <property type="term" value="P:actin filament organization"/>
    <property type="evidence" value="ECO:0000318"/>
    <property type="project" value="GO_Central"/>
</dbReference>
<dbReference type="GO" id="GO:0048309">
    <property type="term" value="P:endoplasmic reticulum inheritance"/>
    <property type="evidence" value="ECO:0000315"/>
    <property type="project" value="SGD"/>
</dbReference>
<dbReference type="GO" id="GO:0008298">
    <property type="term" value="P:intracellular mRNA localization"/>
    <property type="evidence" value="ECO:0000315"/>
    <property type="project" value="SGD"/>
</dbReference>
<dbReference type="GO" id="GO:0007533">
    <property type="term" value="P:mating type switching"/>
    <property type="evidence" value="ECO:0000315"/>
    <property type="project" value="SGD"/>
</dbReference>
<dbReference type="GO" id="GO:0051028">
    <property type="term" value="P:mRNA transport"/>
    <property type="evidence" value="ECO:0007669"/>
    <property type="project" value="UniProtKB-KW"/>
</dbReference>
<dbReference type="GO" id="GO:0030050">
    <property type="term" value="P:vesicle transport along actin filament"/>
    <property type="evidence" value="ECO:0000303"/>
    <property type="project" value="ComplexPortal"/>
</dbReference>
<dbReference type="CDD" id="cd15479">
    <property type="entry name" value="fMyo4p_CBD"/>
    <property type="match status" value="1"/>
</dbReference>
<dbReference type="CDD" id="cd01380">
    <property type="entry name" value="MYSc_Myo5"/>
    <property type="match status" value="1"/>
</dbReference>
<dbReference type="FunFam" id="1.20.58.530:FF:000002">
    <property type="entry name" value="Class V myosin"/>
    <property type="match status" value="1"/>
</dbReference>
<dbReference type="FunFam" id="1.10.10.820:FF:000001">
    <property type="entry name" value="Myosin heavy chain"/>
    <property type="match status" value="1"/>
</dbReference>
<dbReference type="Gene3D" id="1.10.10.820">
    <property type="match status" value="1"/>
</dbReference>
<dbReference type="Gene3D" id="1.20.5.190">
    <property type="match status" value="1"/>
</dbReference>
<dbReference type="Gene3D" id="1.20.5.4820">
    <property type="match status" value="1"/>
</dbReference>
<dbReference type="Gene3D" id="1.20.58.530">
    <property type="match status" value="1"/>
</dbReference>
<dbReference type="Gene3D" id="3.40.850.10">
    <property type="entry name" value="Kinesin motor domain"/>
    <property type="match status" value="1"/>
</dbReference>
<dbReference type="Gene3D" id="1.20.120.720">
    <property type="entry name" value="Myosin VI head, motor domain, U50 subdomain"/>
    <property type="match status" value="1"/>
</dbReference>
<dbReference type="InterPro" id="IPR002710">
    <property type="entry name" value="Dilute_dom"/>
</dbReference>
<dbReference type="InterPro" id="IPR000048">
    <property type="entry name" value="IQ_motif_EF-hand-BS"/>
</dbReference>
<dbReference type="InterPro" id="IPR036961">
    <property type="entry name" value="Kinesin_motor_dom_sf"/>
</dbReference>
<dbReference type="InterPro" id="IPR001609">
    <property type="entry name" value="Myosin_head_motor_dom-like"/>
</dbReference>
<dbReference type="InterPro" id="IPR004009">
    <property type="entry name" value="Myosin_N"/>
</dbReference>
<dbReference type="InterPro" id="IPR036103">
    <property type="entry name" value="MYSc_Myo5"/>
</dbReference>
<dbReference type="InterPro" id="IPR027417">
    <property type="entry name" value="P-loop_NTPase"/>
</dbReference>
<dbReference type="PANTHER" id="PTHR13140:SF706">
    <property type="entry name" value="DILUTE CLASS UNCONVENTIONAL MYOSIN, ISOFORM C"/>
    <property type="match status" value="1"/>
</dbReference>
<dbReference type="PANTHER" id="PTHR13140">
    <property type="entry name" value="MYOSIN"/>
    <property type="match status" value="1"/>
</dbReference>
<dbReference type="Pfam" id="PF01843">
    <property type="entry name" value="DIL"/>
    <property type="match status" value="1"/>
</dbReference>
<dbReference type="Pfam" id="PF00612">
    <property type="entry name" value="IQ"/>
    <property type="match status" value="1"/>
</dbReference>
<dbReference type="Pfam" id="PF00063">
    <property type="entry name" value="Myosin_head"/>
    <property type="match status" value="1"/>
</dbReference>
<dbReference type="PRINTS" id="PR00193">
    <property type="entry name" value="MYOSINHEAVY"/>
</dbReference>
<dbReference type="SMART" id="SM01132">
    <property type="entry name" value="DIL"/>
    <property type="match status" value="1"/>
</dbReference>
<dbReference type="SMART" id="SM00015">
    <property type="entry name" value="IQ"/>
    <property type="match status" value="4"/>
</dbReference>
<dbReference type="SMART" id="SM00242">
    <property type="entry name" value="MYSc"/>
    <property type="match status" value="1"/>
</dbReference>
<dbReference type="SUPFAM" id="SSF50084">
    <property type="entry name" value="Myosin S1 fragment, N-terminal domain"/>
    <property type="match status" value="1"/>
</dbReference>
<dbReference type="SUPFAM" id="SSF52540">
    <property type="entry name" value="P-loop containing nucleoside triphosphate hydrolases"/>
    <property type="match status" value="1"/>
</dbReference>
<dbReference type="PROSITE" id="PS51126">
    <property type="entry name" value="DILUTE"/>
    <property type="match status" value="1"/>
</dbReference>
<dbReference type="PROSITE" id="PS50096">
    <property type="entry name" value="IQ"/>
    <property type="match status" value="2"/>
</dbReference>
<dbReference type="PROSITE" id="PS51456">
    <property type="entry name" value="MYOSIN_MOTOR"/>
    <property type="match status" value="1"/>
</dbReference>
<dbReference type="PROSITE" id="PS51844">
    <property type="entry name" value="SH3_LIKE"/>
    <property type="match status" value="1"/>
</dbReference>
<accession>P32492</accession>
<accession>D6VPI9</accession>
<protein>
    <recommendedName>
        <fullName>Myosin-4</fullName>
    </recommendedName>
    <alternativeName>
        <fullName>SWI5-dependent HO expression protein 1</fullName>
    </alternativeName>
</protein>
<comment type="function">
    <text evidence="6 8 9 10 12 13 14">Part of the mRNA localization machinery that restricts accumulation of certain proteins to the bud and in the daughter cell. Recruited to specific mRNAs including the ASH1 mRNA, coding for a repressor of the HO endonuclease, via its interaction with SHE3.</text>
</comment>
<comment type="subunit">
    <text evidence="7 8 9 14">Interacts with SHE2 and SHE3.</text>
</comment>
<comment type="interaction">
    <interactant intactId="EBI-11681">
        <id>P32492</id>
    </interactant>
    <interactant intactId="EBI-26866">
        <id>P36068</id>
        <label>SHE2</label>
    </interactant>
    <organismsDiffer>false</organismsDiffer>
    <experiments>4</experiments>
</comment>
<comment type="interaction">
    <interactant intactId="EBI-11681">
        <id>P32492</id>
    </interactant>
    <interactant intactId="EBI-21600">
        <id>P38272</id>
        <label>SHE3</label>
    </interactant>
    <organismsDiffer>false</organismsDiffer>
    <experiments>11</experiments>
</comment>
<comment type="interaction">
    <interactant intactId="EBI-11681">
        <id>P32492</id>
    </interactant>
    <interactant intactId="EBI-17086">
        <id>P51534</id>
        <label>SHE4</label>
    </interactant>
    <organismsDiffer>false</organismsDiffer>
    <experiments>4</experiments>
</comment>
<comment type="subcellular location">
    <subcellularLocation>
        <location evidence="10">Bud</location>
    </subcellularLocation>
    <text>Accumulates preferentially in growing buds.</text>
</comment>
<comment type="disruption phenotype">
    <text evidence="12">Abnormal localization of ASH1 protein to daughter cell, with protein mislocalized to mother and daughter (PubMed:15082763). Decreases HO mRNA level (PubMed:15082763).</text>
</comment>
<comment type="miscellaneous">
    <text evidence="11">Present with 2210 molecules/cell in log phase SD medium.</text>
</comment>
<comment type="similarity">
    <text evidence="15">Belongs to the TRAFAC class myosin-kinesin ATPase superfamily. Myosin family.</text>
</comment>
<sequence>MSFEVGTKCWYPHKEQGWIGGEVTKNDFFEGTFHLELKLEDGETVSIETNSFENDDDHPTLPVLRNPPILESTDDLTTLSYLNEPAVLHAIKKRYMNGQIYTYSGIVLIAANPFDKVDHLYSREMIQNYSSKRKDELEPHLFAIAEEAYRFMVHEKANQTVVVSGESGAGKTVSAKYIMRYFASVQESNNREGEVEMSQIESQILATNPIMEAFGNAKTTRNDNSSRFGKYLQILFDENTTIRGSKIRTYLLEKSRLVYQPETERNYHIFYQILEGLPEPVKQELHLSSPKDYHYTNQGGQPNIAGIDEAREYKITTDALSLVGINHETQLGIFKILAGLLHIGNIEMKMTRNDASLSSEEQNLQIACELLGIDPFNFAKWIVKKQIVTRSEKIVTNLNYNQALIARDSVAKFIYSTLFDWLVDNINKTLYDPELDQQDHVFSFIGILDIYGFEHFEKNSFEQFCINYANEKLQQEFNQHVFKLEQEEYVKEEIEWSFIEFSDNQPCIDLIENKLGILSLLDEESRLPSGSDESWASKLYSAFNKPPSNEVFSKPRFGQTKFIVSHYAVDVEYEVEGFIEKNRDSVSLGHLDVFKATTNPIFKQILDNRELRSDDAPEEQNTEKKIMIPARLSQKKPTLGSMFKKSLGELMAIINSTNVHYIRCIKPNSEKKPWEFDNLMVLSQLRACGVLETIRISCAGFPSRWTFDEFVQRYFLLTDYSLWSGILYNPDLPKEAIVNFCQSILDATISDSAKYQIGNTKIFFKAGMLAFLEKLRTNKMNEICIIIQKKIRARYYRLQYLQTMESIKKCQSQIRSLLVRTRVDHELKTRAAILLQTNIRALWKREYYRAAIGQIIKLQCTCKRKLILDSVNRKFMLMAAVIIQSYIRSYGHKTDYRTLKRSSILVQSAMRMQLARRRYIVLQKEVEERNIRASYGIGLLEEAIEFKNSFILNLEMLNDSYTRLTQLLQGDLSNIPSKQRQEYETIVNGYNDKISKLKTLQVEIMNTLNKKNALKERKKKQSSLIQSHMQSLAAIKGNKPSRLSDEVKSMKQELAFIENVIAQDFTTTYSANKNDKVKGLGIAGQQVKPKLVNVIRRESGNPDLLELLMDLNCYTLEVTEGYLKKVNVTEVNGDNVLGPIHVITTVVSSLVRNGLLIQSSKFISKVLLTVESIVMSLPKDETMLGGIFWLSNLSRLPAFAANQKTLYEANGGDEKDKLTLIYLNDLENETLKVFDKIYSTWLVKFMKHASAHIEIFDMVLNEKLFKNSGDEKFAKLFTFLNEFDAVLCKFQVVDSMHTKIFNDTLKYLNVMLFNDLITKCPALNWKYGYEVDRNIERLVSWFEPRIEDVRPNLIQIIQAVKILQLKISNLNEFKLLFDFWYALNPAQIQAILLKYKPANKGEAGVPNEILNYLANVIKRENLSLPGKMEIMLSAQFDSAKNHLRYDTSAITQNSNTEGLATVSKIIKLDRK</sequence>
<reference key="1">
    <citation type="journal article" date="1994" name="J. Cell Sci.">
        <title>Identification of MYO4, a second class V myosin gene in yeast.</title>
        <authorList>
            <person name="Haarer B.K."/>
            <person name="Petzold A."/>
            <person name="Lillie S.H."/>
            <person name="Brown S.S."/>
        </authorList>
    </citation>
    <scope>NUCLEOTIDE SEQUENCE</scope>
</reference>
<reference key="2">
    <citation type="journal article" date="1995" name="Proc. Natl. Acad. Sci. U.S.A.">
        <title>The nucleotide sequence of chromosome I from Saccharomyces cerevisiae.</title>
        <authorList>
            <person name="Bussey H."/>
            <person name="Kaback D.B."/>
            <person name="Zhong W.-W."/>
            <person name="Vo D.H."/>
            <person name="Clark M.W."/>
            <person name="Fortin N."/>
            <person name="Hall J."/>
            <person name="Ouellette B.F.F."/>
            <person name="Keng T."/>
            <person name="Barton A.B."/>
            <person name="Su Y."/>
            <person name="Davies C.J."/>
            <person name="Storms R.K."/>
        </authorList>
    </citation>
    <scope>NUCLEOTIDE SEQUENCE [LARGE SCALE GENOMIC DNA]</scope>
    <source>
        <strain>ATCC 204508 / S288c</strain>
    </source>
</reference>
<reference key="3">
    <citation type="journal article" date="2014" name="G3 (Bethesda)">
        <title>The reference genome sequence of Saccharomyces cerevisiae: Then and now.</title>
        <authorList>
            <person name="Engel S.R."/>
            <person name="Dietrich F.S."/>
            <person name="Fisk D.G."/>
            <person name="Binkley G."/>
            <person name="Balakrishnan R."/>
            <person name="Costanzo M.C."/>
            <person name="Dwight S.S."/>
            <person name="Hitz B.C."/>
            <person name="Karra K."/>
            <person name="Nash R.S."/>
            <person name="Weng S."/>
            <person name="Wong E.D."/>
            <person name="Lloyd P."/>
            <person name="Skrzypek M.S."/>
            <person name="Miyasato S.R."/>
            <person name="Simison M."/>
            <person name="Cherry J.M."/>
        </authorList>
    </citation>
    <scope>GENOME REANNOTATION</scope>
    <source>
        <strain>ATCC 204508 / S288c</strain>
    </source>
</reference>
<reference key="4">
    <citation type="journal article" date="1999" name="J. Cell Sci.">
        <title>Association of the class V myosin Myo4p with a localised messenger RNA in budding yeast depends on She proteins.</title>
        <authorList>
            <person name="Munchow S."/>
            <person name="Sauter C."/>
            <person name="Jansen R.P."/>
        </authorList>
    </citation>
    <scope>FUNCTION</scope>
</reference>
<reference key="5">
    <citation type="journal article" date="2000" name="EMBO J.">
        <title>She2p, a novel RNA-binding protein tethers ASH1 mRNA to the Myo4p myosin motor via She3p.</title>
        <authorList>
            <person name="Bohl F."/>
            <person name="Kruse C."/>
            <person name="Frank A."/>
            <person name="Ferring D."/>
            <person name="Jansen R.P."/>
        </authorList>
    </citation>
    <scope>FUNCTION</scope>
    <scope>INTERACTION WITH SHE2 AND SHE3</scope>
</reference>
<reference key="6">
    <citation type="journal article" date="2000" name="EMBO J.">
        <title>She2p is a novel RNA-binding protein that recruits the Myo4p-She3p complex to ASH1 mRNA.</title>
        <authorList>
            <person name="Long R.M."/>
            <person name="Gu W."/>
            <person name="Lorimer E."/>
            <person name="Singer R.H."/>
            <person name="Chartrand P."/>
        </authorList>
    </citation>
    <scope>FUNCTION</scope>
    <scope>INTERACTION WITH SHE3</scope>
</reference>
<reference key="7">
    <citation type="journal article" date="2000" name="Proc. Natl. Acad. Sci. U.S.A.">
        <title>The myosin motor, Myo4p, binds Ash1 mRNA via the adapter protein, She3p.</title>
        <authorList>
            <person name="Takizawa P.A."/>
            <person name="Vale R.D."/>
        </authorList>
    </citation>
    <scope>INTERACTION WITH SHE2 AND SHE3</scope>
</reference>
<reference key="8">
    <citation type="journal article" date="2002" name="J. Cell Biol.">
        <title>Ribonucleoprotein-dependent localization of the yeast class V myosin Myo4p.</title>
        <authorList>
            <person name="Kruse C."/>
            <person name="Jaedicke A."/>
            <person name="Beaudouin J."/>
            <person name="Bohl F."/>
            <person name="Ferring D."/>
            <person name="Guttler T."/>
            <person name="Ellenberg J."/>
            <person name="Jansen R.P."/>
        </authorList>
    </citation>
    <scope>FUNCTION</scope>
    <scope>SUBCELLULAR LOCATION</scope>
</reference>
<reference key="9">
    <citation type="journal article" date="2003" name="Nature">
        <title>Global analysis of protein expression in yeast.</title>
        <authorList>
            <person name="Ghaemmaghami S."/>
            <person name="Huh W.-K."/>
            <person name="Bower K."/>
            <person name="Howson R.W."/>
            <person name="Belle A."/>
            <person name="Dephoure N."/>
            <person name="O'Shea E.K."/>
            <person name="Weissman J.S."/>
        </authorList>
    </citation>
    <scope>LEVEL OF PROTEIN EXPRESSION [LARGE SCALE ANALYSIS]</scope>
</reference>
<reference key="10">
    <citation type="journal article" date="2004" name="J. Biol. Chem.">
        <title>ASH1 mRNA anchoring requires reorganization of the Myo4p-She3p-She2p transport complex.</title>
        <authorList>
            <person name="Gonsalvez G.B."/>
            <person name="Little J.L."/>
            <person name="Long R.M."/>
        </authorList>
    </citation>
    <scope>FUNCTION</scope>
</reference>
<reference key="11">
    <citation type="journal article" date="2004" name="Mol. Cell. Biol.">
        <title>Posttranscriptional regulation of HO expression by the Mkt1-Pbp1 complex.</title>
        <authorList>
            <person name="Tadauchi T."/>
            <person name="Inada T."/>
            <person name="Matsumoto K."/>
            <person name="Irie K."/>
        </authorList>
    </citation>
    <scope>FUNCTION</scope>
    <scope>DISRUPTION PHENOTYPE</scope>
</reference>
<reference key="12">
    <citation type="journal article" date="2010" name="J. Cell Biol.">
        <title>The structure of the Myo4p globular tail and its function in ASH1 mRNA localization.</title>
        <authorList>
            <person name="Heuck A."/>
            <person name="Fetka I."/>
            <person name="Brewer D.N."/>
            <person name="Huls D."/>
            <person name="Munson M."/>
            <person name="Jansen R.P."/>
            <person name="Niessing D."/>
        </authorList>
    </citation>
    <scope>X-RAY CRYSTALLOGRAPHY (2.3 ANGSTROMS) OF 1091-1471</scope>
    <scope>FUNCTION</scope>
    <scope>INTERACTION WITH SHE3</scope>
</reference>
<keyword id="KW-0002">3D-structure</keyword>
<keyword id="KW-0009">Actin-binding</keyword>
<keyword id="KW-0067">ATP-binding</keyword>
<keyword id="KW-0112">Calmodulin-binding</keyword>
<keyword id="KW-0175">Coiled coil</keyword>
<keyword id="KW-0505">Motor protein</keyword>
<keyword id="KW-0509">mRNA transport</keyword>
<keyword id="KW-0518">Myosin</keyword>
<keyword id="KW-0547">Nucleotide-binding</keyword>
<keyword id="KW-1185">Reference proteome</keyword>
<keyword id="KW-0677">Repeat</keyword>
<keyword id="KW-0813">Transport</keyword>
<evidence type="ECO:0000255" key="1"/>
<evidence type="ECO:0000255" key="2">
    <source>
        <dbReference type="PROSITE-ProRule" id="PRU00116"/>
    </source>
</evidence>
<evidence type="ECO:0000255" key="3">
    <source>
        <dbReference type="PROSITE-ProRule" id="PRU00503"/>
    </source>
</evidence>
<evidence type="ECO:0000255" key="4">
    <source>
        <dbReference type="PROSITE-ProRule" id="PRU00782"/>
    </source>
</evidence>
<evidence type="ECO:0000255" key="5">
    <source>
        <dbReference type="PROSITE-ProRule" id="PRU01190"/>
    </source>
</evidence>
<evidence type="ECO:0000269" key="6">
    <source>
    </source>
</evidence>
<evidence type="ECO:0000269" key="7">
    <source>
    </source>
</evidence>
<evidence type="ECO:0000269" key="8">
    <source>
    </source>
</evidence>
<evidence type="ECO:0000269" key="9">
    <source>
    </source>
</evidence>
<evidence type="ECO:0000269" key="10">
    <source>
    </source>
</evidence>
<evidence type="ECO:0000269" key="11">
    <source>
    </source>
</evidence>
<evidence type="ECO:0000269" key="12">
    <source>
    </source>
</evidence>
<evidence type="ECO:0000269" key="13">
    <source>
    </source>
</evidence>
<evidence type="ECO:0000269" key="14">
    <source>
    </source>
</evidence>
<evidence type="ECO:0000305" key="15"/>
<evidence type="ECO:0007829" key="16">
    <source>
        <dbReference type="PDB" id="3MMI"/>
    </source>
</evidence>
<evidence type="ECO:0007829" key="17">
    <source>
        <dbReference type="PDB" id="4LL6"/>
    </source>
</evidence>